<name>SYR_STRMK</name>
<reference key="1">
    <citation type="journal article" date="2008" name="Genome Biol.">
        <title>The complete genome, comparative and functional analysis of Stenotrophomonas maltophilia reveals an organism heavily shielded by drug resistance determinants.</title>
        <authorList>
            <person name="Crossman L.C."/>
            <person name="Gould V.C."/>
            <person name="Dow J.M."/>
            <person name="Vernikos G.S."/>
            <person name="Okazaki A."/>
            <person name="Sebaihia M."/>
            <person name="Saunders D."/>
            <person name="Arrowsmith C."/>
            <person name="Carver T."/>
            <person name="Peters N."/>
            <person name="Adlem E."/>
            <person name="Kerhornou A."/>
            <person name="Lord A."/>
            <person name="Murphy L."/>
            <person name="Seeger K."/>
            <person name="Squares R."/>
            <person name="Rutter S."/>
            <person name="Quail M.A."/>
            <person name="Rajandream M.A."/>
            <person name="Harris D."/>
            <person name="Churcher C."/>
            <person name="Bentley S.D."/>
            <person name="Parkhill J."/>
            <person name="Thomson N.R."/>
            <person name="Avison M.B."/>
        </authorList>
    </citation>
    <scope>NUCLEOTIDE SEQUENCE [LARGE SCALE GENOMIC DNA]</scope>
    <source>
        <strain>K279a</strain>
    </source>
</reference>
<comment type="catalytic activity">
    <reaction evidence="1">
        <text>tRNA(Arg) + L-arginine + ATP = L-arginyl-tRNA(Arg) + AMP + diphosphate</text>
        <dbReference type="Rhea" id="RHEA:20301"/>
        <dbReference type="Rhea" id="RHEA-COMP:9658"/>
        <dbReference type="Rhea" id="RHEA-COMP:9673"/>
        <dbReference type="ChEBI" id="CHEBI:30616"/>
        <dbReference type="ChEBI" id="CHEBI:32682"/>
        <dbReference type="ChEBI" id="CHEBI:33019"/>
        <dbReference type="ChEBI" id="CHEBI:78442"/>
        <dbReference type="ChEBI" id="CHEBI:78513"/>
        <dbReference type="ChEBI" id="CHEBI:456215"/>
        <dbReference type="EC" id="6.1.1.19"/>
    </reaction>
</comment>
<comment type="subunit">
    <text evidence="1">Monomer.</text>
</comment>
<comment type="subcellular location">
    <subcellularLocation>
        <location evidence="1">Cytoplasm</location>
    </subcellularLocation>
</comment>
<comment type="similarity">
    <text evidence="1">Belongs to the class-I aminoacyl-tRNA synthetase family.</text>
</comment>
<keyword id="KW-0030">Aminoacyl-tRNA synthetase</keyword>
<keyword id="KW-0067">ATP-binding</keyword>
<keyword id="KW-0963">Cytoplasm</keyword>
<keyword id="KW-0436">Ligase</keyword>
<keyword id="KW-0547">Nucleotide-binding</keyword>
<keyword id="KW-0648">Protein biosynthesis</keyword>
<keyword id="KW-1185">Reference proteome</keyword>
<organism>
    <name type="scientific">Stenotrophomonas maltophilia (strain K279a)</name>
    <dbReference type="NCBI Taxonomy" id="522373"/>
    <lineage>
        <taxon>Bacteria</taxon>
        <taxon>Pseudomonadati</taxon>
        <taxon>Pseudomonadota</taxon>
        <taxon>Gammaproteobacteria</taxon>
        <taxon>Lysobacterales</taxon>
        <taxon>Lysobacteraceae</taxon>
        <taxon>Stenotrophomonas</taxon>
        <taxon>Stenotrophomonas maltophilia group</taxon>
    </lineage>
</organism>
<proteinExistence type="inferred from homology"/>
<evidence type="ECO:0000255" key="1">
    <source>
        <dbReference type="HAMAP-Rule" id="MF_00123"/>
    </source>
</evidence>
<dbReference type="EC" id="6.1.1.19" evidence="1"/>
<dbReference type="EMBL" id="AM743169">
    <property type="protein sequence ID" value="CAQ43997.1"/>
    <property type="molecule type" value="Genomic_DNA"/>
</dbReference>
<dbReference type="RefSeq" id="WP_012478915.1">
    <property type="nucleotide sequence ID" value="NC_010943.1"/>
</dbReference>
<dbReference type="SMR" id="B2FJW0"/>
<dbReference type="EnsemblBacteria" id="CAQ43997">
    <property type="protein sequence ID" value="CAQ43997"/>
    <property type="gene ID" value="Smlt0398"/>
</dbReference>
<dbReference type="GeneID" id="93831444"/>
<dbReference type="KEGG" id="sml:Smlt0398"/>
<dbReference type="PATRIC" id="fig|522373.3.peg.373"/>
<dbReference type="eggNOG" id="COG0018">
    <property type="taxonomic scope" value="Bacteria"/>
</dbReference>
<dbReference type="HOGENOM" id="CLU_006406_0_1_6"/>
<dbReference type="Proteomes" id="UP000008840">
    <property type="component" value="Chromosome"/>
</dbReference>
<dbReference type="GO" id="GO:0005737">
    <property type="term" value="C:cytoplasm"/>
    <property type="evidence" value="ECO:0007669"/>
    <property type="project" value="UniProtKB-SubCell"/>
</dbReference>
<dbReference type="GO" id="GO:0004814">
    <property type="term" value="F:arginine-tRNA ligase activity"/>
    <property type="evidence" value="ECO:0007669"/>
    <property type="project" value="UniProtKB-UniRule"/>
</dbReference>
<dbReference type="GO" id="GO:0005524">
    <property type="term" value="F:ATP binding"/>
    <property type="evidence" value="ECO:0007669"/>
    <property type="project" value="UniProtKB-UniRule"/>
</dbReference>
<dbReference type="GO" id="GO:0006420">
    <property type="term" value="P:arginyl-tRNA aminoacylation"/>
    <property type="evidence" value="ECO:0007669"/>
    <property type="project" value="UniProtKB-UniRule"/>
</dbReference>
<dbReference type="CDD" id="cd07956">
    <property type="entry name" value="Anticodon_Ia_Arg"/>
    <property type="match status" value="1"/>
</dbReference>
<dbReference type="CDD" id="cd00671">
    <property type="entry name" value="ArgRS_core"/>
    <property type="match status" value="1"/>
</dbReference>
<dbReference type="FunFam" id="1.10.730.10:FF:000008">
    <property type="entry name" value="Arginine--tRNA ligase"/>
    <property type="match status" value="1"/>
</dbReference>
<dbReference type="FunFam" id="3.30.1360.70:FF:000003">
    <property type="entry name" value="Arginine--tRNA ligase"/>
    <property type="match status" value="1"/>
</dbReference>
<dbReference type="FunFam" id="3.40.50.620:FF:000062">
    <property type="entry name" value="Arginine--tRNA ligase"/>
    <property type="match status" value="1"/>
</dbReference>
<dbReference type="Gene3D" id="3.30.1360.70">
    <property type="entry name" value="Arginyl tRNA synthetase N-terminal domain"/>
    <property type="match status" value="1"/>
</dbReference>
<dbReference type="Gene3D" id="3.40.50.620">
    <property type="entry name" value="HUPs"/>
    <property type="match status" value="1"/>
</dbReference>
<dbReference type="Gene3D" id="1.10.730.10">
    <property type="entry name" value="Isoleucyl-tRNA Synthetase, Domain 1"/>
    <property type="match status" value="1"/>
</dbReference>
<dbReference type="HAMAP" id="MF_00123">
    <property type="entry name" value="Arg_tRNA_synth"/>
    <property type="match status" value="1"/>
</dbReference>
<dbReference type="InterPro" id="IPR001412">
    <property type="entry name" value="aa-tRNA-synth_I_CS"/>
</dbReference>
<dbReference type="InterPro" id="IPR001278">
    <property type="entry name" value="Arg-tRNA-ligase"/>
</dbReference>
<dbReference type="InterPro" id="IPR005148">
    <property type="entry name" value="Arg-tRNA-synth_N"/>
</dbReference>
<dbReference type="InterPro" id="IPR036695">
    <property type="entry name" value="Arg-tRNA-synth_N_sf"/>
</dbReference>
<dbReference type="InterPro" id="IPR035684">
    <property type="entry name" value="ArgRS_core"/>
</dbReference>
<dbReference type="InterPro" id="IPR008909">
    <property type="entry name" value="DALR_anticod-bd"/>
</dbReference>
<dbReference type="InterPro" id="IPR014729">
    <property type="entry name" value="Rossmann-like_a/b/a_fold"/>
</dbReference>
<dbReference type="InterPro" id="IPR009080">
    <property type="entry name" value="tRNAsynth_Ia_anticodon-bd"/>
</dbReference>
<dbReference type="NCBIfam" id="TIGR00456">
    <property type="entry name" value="argS"/>
    <property type="match status" value="1"/>
</dbReference>
<dbReference type="PANTHER" id="PTHR11956:SF5">
    <property type="entry name" value="ARGININE--TRNA LIGASE, CYTOPLASMIC"/>
    <property type="match status" value="1"/>
</dbReference>
<dbReference type="PANTHER" id="PTHR11956">
    <property type="entry name" value="ARGINYL-TRNA SYNTHETASE"/>
    <property type="match status" value="1"/>
</dbReference>
<dbReference type="Pfam" id="PF03485">
    <property type="entry name" value="Arg_tRNA_synt_N"/>
    <property type="match status" value="1"/>
</dbReference>
<dbReference type="Pfam" id="PF05746">
    <property type="entry name" value="DALR_1"/>
    <property type="match status" value="1"/>
</dbReference>
<dbReference type="Pfam" id="PF00750">
    <property type="entry name" value="tRNA-synt_1d"/>
    <property type="match status" value="1"/>
</dbReference>
<dbReference type="PRINTS" id="PR01038">
    <property type="entry name" value="TRNASYNTHARG"/>
</dbReference>
<dbReference type="SMART" id="SM01016">
    <property type="entry name" value="Arg_tRNA_synt_N"/>
    <property type="match status" value="1"/>
</dbReference>
<dbReference type="SMART" id="SM00836">
    <property type="entry name" value="DALR_1"/>
    <property type="match status" value="1"/>
</dbReference>
<dbReference type="SUPFAM" id="SSF47323">
    <property type="entry name" value="Anticodon-binding domain of a subclass of class I aminoacyl-tRNA synthetases"/>
    <property type="match status" value="1"/>
</dbReference>
<dbReference type="SUPFAM" id="SSF55190">
    <property type="entry name" value="Arginyl-tRNA synthetase (ArgRS), N-terminal 'additional' domain"/>
    <property type="match status" value="1"/>
</dbReference>
<dbReference type="SUPFAM" id="SSF52374">
    <property type="entry name" value="Nucleotidylyl transferase"/>
    <property type="match status" value="1"/>
</dbReference>
<dbReference type="PROSITE" id="PS00178">
    <property type="entry name" value="AA_TRNA_LIGASE_I"/>
    <property type="match status" value="1"/>
</dbReference>
<accession>B2FJW0</accession>
<gene>
    <name evidence="1" type="primary">argS</name>
    <name type="ordered locus">Smlt0398</name>
</gene>
<sequence>MKNLLRALISQGIEALRANGTLPADSLPPDFVVERPKTRDHGDFATNAAMLLAKAARSNPRALAQALVEALPRSEDVSKVEIAGPGFINFHLAPAAYQREAASVIKEAHDYGRNLSGNGRTVGVEYVSANPTGPLHVGHGRAAAIGDCVARVLDANGWNAKREFYYNDAGVQIENLALSTQARIKGIAPDQDGWPEGGYRGEYIADVARAYMAGASVDLEGSTVVGAKDPDDMQAIRRFAVAYLRNEQNLDLAAFGVDFDIYFLESSLYADGKVAEAVAKLQASGHTYEEGGALWLRSTDFGDDKDRVMRKSDGTFTYFVPDVAYHLSKWQRGYERAITELGADHHGSLARVRAGLQAMEVGIPQGWPEYVLHQMVTVMRGGEEVKLSKRAGSYFTLRDLIEEAGRDATRWFLIARKPDSQLTFDIDLARQQSNDNPVFYVQYAHARVCSLLRQAQEKGLVYEQGNGLANLGRLADDASLLLMNEISRYPEVVEAAGVALEPHLVAQYLRELAHAFHTWYHGTPVLVEDAADRNAKLTLACAARQVLANGLELLGVSAPEKM</sequence>
<protein>
    <recommendedName>
        <fullName evidence="1">Arginine--tRNA ligase</fullName>
        <ecNumber evidence="1">6.1.1.19</ecNumber>
    </recommendedName>
    <alternativeName>
        <fullName evidence="1">Arginyl-tRNA synthetase</fullName>
        <shortName evidence="1">ArgRS</shortName>
    </alternativeName>
</protein>
<feature type="chain" id="PRO_1000095410" description="Arginine--tRNA ligase">
    <location>
        <begin position="1"/>
        <end position="562"/>
    </location>
</feature>
<feature type="short sequence motif" description="'HIGH' region">
    <location>
        <begin position="129"/>
        <end position="139"/>
    </location>
</feature>